<sequence length="193" mass="20261">MIGRIAGTLLEKNPPHILVDCNGVGYEVDVPMSTFYNLPHTGEKVVLLTQLIVREDAHLLYGFLTPPERSTFRELLKITGVGARMALAVLSGMSVAELSQAVTLQDAARLTRVPGIGKKTAERLLLELKGKLGADLGPLAGAASPSDHATDILNALVALGYSEKEALAAIKNVPAGTGVSEGIKLSLKALSKA</sequence>
<keyword id="KW-0963">Cytoplasm</keyword>
<keyword id="KW-0227">DNA damage</keyword>
<keyword id="KW-0233">DNA recombination</keyword>
<keyword id="KW-0234">DNA repair</keyword>
<keyword id="KW-0238">DNA-binding</keyword>
<comment type="function">
    <text evidence="1">The RuvA-RuvB-RuvC complex processes Holliday junction (HJ) DNA during genetic recombination and DNA repair, while the RuvA-RuvB complex plays an important role in the rescue of blocked DNA replication forks via replication fork reversal (RFR). RuvA specifically binds to HJ cruciform DNA, conferring on it an open structure. The RuvB hexamer acts as an ATP-dependent pump, pulling dsDNA into and through the RuvAB complex. HJ branch migration allows RuvC to scan DNA until it finds its consensus sequence, where it cleaves and resolves the cruciform DNA.</text>
</comment>
<comment type="subunit">
    <text evidence="1">Homotetramer. Forms an RuvA(8)-RuvB(12)-Holliday junction (HJ) complex. HJ DNA is sandwiched between 2 RuvA tetramers; dsDNA enters through RuvA and exits via RuvB. An RuvB hexamer assembles on each DNA strand where it exits the tetramer. Each RuvB hexamer is contacted by two RuvA subunits (via domain III) on 2 adjacent RuvB subunits; this complex drives branch migration. In the full resolvosome a probable DNA-RuvA(4)-RuvB(12)-RuvC(2) complex forms which resolves the HJ.</text>
</comment>
<comment type="subcellular location">
    <subcellularLocation>
        <location evidence="1">Cytoplasm</location>
    </subcellularLocation>
</comment>
<comment type="domain">
    <text evidence="1">Has three domains with a flexible linker between the domains II and III and assumes an 'L' shape. Domain III is highly mobile and contacts RuvB.</text>
</comment>
<comment type="similarity">
    <text evidence="1">Belongs to the RuvA family.</text>
</comment>
<organism>
    <name type="scientific">Burkholderia pseudomallei (strain 668)</name>
    <dbReference type="NCBI Taxonomy" id="320373"/>
    <lineage>
        <taxon>Bacteria</taxon>
        <taxon>Pseudomonadati</taxon>
        <taxon>Pseudomonadota</taxon>
        <taxon>Betaproteobacteria</taxon>
        <taxon>Burkholderiales</taxon>
        <taxon>Burkholderiaceae</taxon>
        <taxon>Burkholderia</taxon>
        <taxon>pseudomallei group</taxon>
    </lineage>
</organism>
<name>RUVA_BURP6</name>
<reference key="1">
    <citation type="journal article" date="2010" name="Genome Biol. Evol.">
        <title>Continuing evolution of Burkholderia mallei through genome reduction and large-scale rearrangements.</title>
        <authorList>
            <person name="Losada L."/>
            <person name="Ronning C.M."/>
            <person name="DeShazer D."/>
            <person name="Woods D."/>
            <person name="Fedorova N."/>
            <person name="Kim H.S."/>
            <person name="Shabalina S.A."/>
            <person name="Pearson T.R."/>
            <person name="Brinkac L."/>
            <person name="Tan P."/>
            <person name="Nandi T."/>
            <person name="Crabtree J."/>
            <person name="Badger J."/>
            <person name="Beckstrom-Sternberg S."/>
            <person name="Saqib M."/>
            <person name="Schutzer S.E."/>
            <person name="Keim P."/>
            <person name="Nierman W.C."/>
        </authorList>
    </citation>
    <scope>NUCLEOTIDE SEQUENCE [LARGE SCALE GENOMIC DNA]</scope>
    <source>
        <strain>668</strain>
    </source>
</reference>
<feature type="chain" id="PRO_1000002415" description="Holliday junction branch migration complex subunit RuvA">
    <location>
        <begin position="1"/>
        <end position="193"/>
    </location>
</feature>
<feature type="region of interest" description="Domain I" evidence="1">
    <location>
        <begin position="1"/>
        <end position="64"/>
    </location>
</feature>
<feature type="region of interest" description="Domain II" evidence="1">
    <location>
        <begin position="65"/>
        <end position="139"/>
    </location>
</feature>
<feature type="region of interest" description="Flexible linker" evidence="1">
    <location>
        <begin position="139"/>
        <end position="143"/>
    </location>
</feature>
<feature type="region of interest" description="Domain III" evidence="1">
    <location>
        <begin position="144"/>
        <end position="193"/>
    </location>
</feature>
<proteinExistence type="inferred from homology"/>
<protein>
    <recommendedName>
        <fullName evidence="1">Holliday junction branch migration complex subunit RuvA</fullName>
    </recommendedName>
</protein>
<accession>A3NDF5</accession>
<gene>
    <name evidence="1" type="primary">ruvA</name>
    <name type="ordered locus">BURPS668_3365</name>
</gene>
<evidence type="ECO:0000255" key="1">
    <source>
        <dbReference type="HAMAP-Rule" id="MF_00031"/>
    </source>
</evidence>
<dbReference type="EMBL" id="CP000570">
    <property type="protein sequence ID" value="ABN81535.1"/>
    <property type="molecule type" value="Genomic_DNA"/>
</dbReference>
<dbReference type="RefSeq" id="WP_004194029.1">
    <property type="nucleotide sequence ID" value="NC_009074.1"/>
</dbReference>
<dbReference type="SMR" id="A3NDF5"/>
<dbReference type="GeneID" id="93061493"/>
<dbReference type="KEGG" id="bpd:BURPS668_3365"/>
<dbReference type="HOGENOM" id="CLU_087936_0_0_4"/>
<dbReference type="GO" id="GO:0005737">
    <property type="term" value="C:cytoplasm"/>
    <property type="evidence" value="ECO:0007669"/>
    <property type="project" value="UniProtKB-SubCell"/>
</dbReference>
<dbReference type="GO" id="GO:0009379">
    <property type="term" value="C:Holliday junction helicase complex"/>
    <property type="evidence" value="ECO:0007669"/>
    <property type="project" value="InterPro"/>
</dbReference>
<dbReference type="GO" id="GO:0048476">
    <property type="term" value="C:Holliday junction resolvase complex"/>
    <property type="evidence" value="ECO:0007669"/>
    <property type="project" value="UniProtKB-UniRule"/>
</dbReference>
<dbReference type="GO" id="GO:0005524">
    <property type="term" value="F:ATP binding"/>
    <property type="evidence" value="ECO:0007669"/>
    <property type="project" value="InterPro"/>
</dbReference>
<dbReference type="GO" id="GO:0000400">
    <property type="term" value="F:four-way junction DNA binding"/>
    <property type="evidence" value="ECO:0007669"/>
    <property type="project" value="UniProtKB-UniRule"/>
</dbReference>
<dbReference type="GO" id="GO:0009378">
    <property type="term" value="F:four-way junction helicase activity"/>
    <property type="evidence" value="ECO:0007669"/>
    <property type="project" value="InterPro"/>
</dbReference>
<dbReference type="GO" id="GO:0006310">
    <property type="term" value="P:DNA recombination"/>
    <property type="evidence" value="ECO:0007669"/>
    <property type="project" value="UniProtKB-UniRule"/>
</dbReference>
<dbReference type="GO" id="GO:0006281">
    <property type="term" value="P:DNA repair"/>
    <property type="evidence" value="ECO:0007669"/>
    <property type="project" value="UniProtKB-UniRule"/>
</dbReference>
<dbReference type="CDD" id="cd14332">
    <property type="entry name" value="UBA_RuvA_C"/>
    <property type="match status" value="1"/>
</dbReference>
<dbReference type="Gene3D" id="1.10.150.20">
    <property type="entry name" value="5' to 3' exonuclease, C-terminal subdomain"/>
    <property type="match status" value="1"/>
</dbReference>
<dbReference type="Gene3D" id="1.10.8.10">
    <property type="entry name" value="DNA helicase RuvA subunit, C-terminal domain"/>
    <property type="match status" value="1"/>
</dbReference>
<dbReference type="Gene3D" id="2.40.50.140">
    <property type="entry name" value="Nucleic acid-binding proteins"/>
    <property type="match status" value="1"/>
</dbReference>
<dbReference type="HAMAP" id="MF_00031">
    <property type="entry name" value="DNA_HJ_migration_RuvA"/>
    <property type="match status" value="1"/>
</dbReference>
<dbReference type="InterPro" id="IPR013849">
    <property type="entry name" value="DNA_helicase_Holl-junc_RuvA_I"/>
</dbReference>
<dbReference type="InterPro" id="IPR003583">
    <property type="entry name" value="Hlx-hairpin-Hlx_DNA-bd_motif"/>
</dbReference>
<dbReference type="InterPro" id="IPR012340">
    <property type="entry name" value="NA-bd_OB-fold"/>
</dbReference>
<dbReference type="InterPro" id="IPR000085">
    <property type="entry name" value="RuvA"/>
</dbReference>
<dbReference type="InterPro" id="IPR010994">
    <property type="entry name" value="RuvA_2-like"/>
</dbReference>
<dbReference type="InterPro" id="IPR011114">
    <property type="entry name" value="RuvA_C"/>
</dbReference>
<dbReference type="InterPro" id="IPR036267">
    <property type="entry name" value="RuvA_C_sf"/>
</dbReference>
<dbReference type="NCBIfam" id="TIGR00084">
    <property type="entry name" value="ruvA"/>
    <property type="match status" value="1"/>
</dbReference>
<dbReference type="Pfam" id="PF14520">
    <property type="entry name" value="HHH_5"/>
    <property type="match status" value="1"/>
</dbReference>
<dbReference type="Pfam" id="PF07499">
    <property type="entry name" value="RuvA_C"/>
    <property type="match status" value="1"/>
</dbReference>
<dbReference type="Pfam" id="PF01330">
    <property type="entry name" value="RuvA_N"/>
    <property type="match status" value="1"/>
</dbReference>
<dbReference type="SMART" id="SM00278">
    <property type="entry name" value="HhH1"/>
    <property type="match status" value="2"/>
</dbReference>
<dbReference type="SUPFAM" id="SSF46929">
    <property type="entry name" value="DNA helicase RuvA subunit, C-terminal domain"/>
    <property type="match status" value="1"/>
</dbReference>
<dbReference type="SUPFAM" id="SSF50249">
    <property type="entry name" value="Nucleic acid-binding proteins"/>
    <property type="match status" value="1"/>
</dbReference>
<dbReference type="SUPFAM" id="SSF47781">
    <property type="entry name" value="RuvA domain 2-like"/>
    <property type="match status" value="1"/>
</dbReference>